<sequence>MNLISIPAFQDNYIWLLANRQKHCVIVDPGESAPVLATLAQGQYVPQAILLTHHHNDHVGGVADLRHHFPDIPVYGPQETAKKGATVIVNDGDSLTIAGQNYTIIAVPGHTLGHIAYYSSPYLFCGDTLFSAGCGRLLEGTPEQMYASIQRLAQLPDETLICCAHEYTLSNLKFAHAILPADQDIATYQQQIEQLRSKNLPSLPVKLQFERKINVFLRCNDIDLQRKIGITSPPDSLVSVFCELRSRKDSF</sequence>
<gene>
    <name evidence="1" type="primary">gloB</name>
    <name type="ordered locus">YPK_1106</name>
</gene>
<feature type="chain" id="PRO_1000144824" description="Hydroxyacylglutathione hydrolase">
    <location>
        <begin position="1"/>
        <end position="251"/>
    </location>
</feature>
<feature type="binding site" evidence="1">
    <location>
        <position position="53"/>
    </location>
    <ligand>
        <name>Zn(2+)</name>
        <dbReference type="ChEBI" id="CHEBI:29105"/>
        <label>1</label>
    </ligand>
</feature>
<feature type="binding site" evidence="1">
    <location>
        <position position="55"/>
    </location>
    <ligand>
        <name>Zn(2+)</name>
        <dbReference type="ChEBI" id="CHEBI:29105"/>
        <label>1</label>
    </ligand>
</feature>
<feature type="binding site" evidence="1">
    <location>
        <position position="57"/>
    </location>
    <ligand>
        <name>Zn(2+)</name>
        <dbReference type="ChEBI" id="CHEBI:29105"/>
        <label>2</label>
    </ligand>
</feature>
<feature type="binding site" evidence="1">
    <location>
        <position position="58"/>
    </location>
    <ligand>
        <name>Zn(2+)</name>
        <dbReference type="ChEBI" id="CHEBI:29105"/>
        <label>2</label>
    </ligand>
</feature>
<feature type="binding site" evidence="1">
    <location>
        <position position="110"/>
    </location>
    <ligand>
        <name>Zn(2+)</name>
        <dbReference type="ChEBI" id="CHEBI:29105"/>
        <label>1</label>
    </ligand>
</feature>
<feature type="binding site" evidence="1">
    <location>
        <position position="127"/>
    </location>
    <ligand>
        <name>Zn(2+)</name>
        <dbReference type="ChEBI" id="CHEBI:29105"/>
        <label>1</label>
    </ligand>
</feature>
<feature type="binding site" evidence="1">
    <location>
        <position position="127"/>
    </location>
    <ligand>
        <name>Zn(2+)</name>
        <dbReference type="ChEBI" id="CHEBI:29105"/>
        <label>2</label>
    </ligand>
</feature>
<feature type="binding site" evidence="1">
    <location>
        <position position="165"/>
    </location>
    <ligand>
        <name>Zn(2+)</name>
        <dbReference type="ChEBI" id="CHEBI:29105"/>
        <label>2</label>
    </ligand>
</feature>
<accession>B1JR44</accession>
<evidence type="ECO:0000255" key="1">
    <source>
        <dbReference type="HAMAP-Rule" id="MF_01374"/>
    </source>
</evidence>
<proteinExistence type="inferred from homology"/>
<reference key="1">
    <citation type="submission" date="2008-02" db="EMBL/GenBank/DDBJ databases">
        <title>Complete sequence of Yersinia pseudotuberculosis YPIII.</title>
        <authorList>
            <consortium name="US DOE Joint Genome Institute"/>
            <person name="Copeland A."/>
            <person name="Lucas S."/>
            <person name="Lapidus A."/>
            <person name="Glavina del Rio T."/>
            <person name="Dalin E."/>
            <person name="Tice H."/>
            <person name="Bruce D."/>
            <person name="Goodwin L."/>
            <person name="Pitluck S."/>
            <person name="Munk A.C."/>
            <person name="Brettin T."/>
            <person name="Detter J.C."/>
            <person name="Han C."/>
            <person name="Tapia R."/>
            <person name="Schmutz J."/>
            <person name="Larimer F."/>
            <person name="Land M."/>
            <person name="Hauser L."/>
            <person name="Challacombe J.F."/>
            <person name="Green L."/>
            <person name="Lindler L.E."/>
            <person name="Nikolich M.P."/>
            <person name="Richardson P."/>
        </authorList>
    </citation>
    <scope>NUCLEOTIDE SEQUENCE [LARGE SCALE GENOMIC DNA]</scope>
    <source>
        <strain>YPIII</strain>
    </source>
</reference>
<comment type="function">
    <text evidence="1">Thiolesterase that catalyzes the hydrolysis of S-D-lactoyl-glutathione to form glutathione and D-lactic acid.</text>
</comment>
<comment type="catalytic activity">
    <reaction evidence="1">
        <text>an S-(2-hydroxyacyl)glutathione + H2O = a 2-hydroxy carboxylate + glutathione + H(+)</text>
        <dbReference type="Rhea" id="RHEA:21864"/>
        <dbReference type="ChEBI" id="CHEBI:15377"/>
        <dbReference type="ChEBI" id="CHEBI:15378"/>
        <dbReference type="ChEBI" id="CHEBI:57925"/>
        <dbReference type="ChEBI" id="CHEBI:58896"/>
        <dbReference type="ChEBI" id="CHEBI:71261"/>
        <dbReference type="EC" id="3.1.2.6"/>
    </reaction>
</comment>
<comment type="cofactor">
    <cofactor evidence="1">
        <name>Zn(2+)</name>
        <dbReference type="ChEBI" id="CHEBI:29105"/>
    </cofactor>
    <text evidence="1">Binds 2 Zn(2+) ions per subunit.</text>
</comment>
<comment type="pathway">
    <text evidence="1">Secondary metabolite metabolism; methylglyoxal degradation; (R)-lactate from methylglyoxal: step 2/2.</text>
</comment>
<comment type="subunit">
    <text evidence="1">Monomer.</text>
</comment>
<comment type="similarity">
    <text evidence="1">Belongs to the metallo-beta-lactamase superfamily. Glyoxalase II family.</text>
</comment>
<protein>
    <recommendedName>
        <fullName evidence="1">Hydroxyacylglutathione hydrolase</fullName>
        <ecNumber evidence="1">3.1.2.6</ecNumber>
    </recommendedName>
    <alternativeName>
        <fullName evidence="1">Glyoxalase II</fullName>
        <shortName evidence="1">Glx II</shortName>
    </alternativeName>
</protein>
<name>GLO2_YERPY</name>
<dbReference type="EC" id="3.1.2.6" evidence="1"/>
<dbReference type="EMBL" id="CP000950">
    <property type="protein sequence ID" value="ACA67404.1"/>
    <property type="molecule type" value="Genomic_DNA"/>
</dbReference>
<dbReference type="RefSeq" id="WP_011192852.1">
    <property type="nucleotide sequence ID" value="NZ_CP009792.1"/>
</dbReference>
<dbReference type="SMR" id="B1JR44"/>
<dbReference type="GeneID" id="49785020"/>
<dbReference type="KEGG" id="ypy:YPK_1106"/>
<dbReference type="PATRIC" id="fig|502800.11.peg.1736"/>
<dbReference type="UniPathway" id="UPA00619">
    <property type="reaction ID" value="UER00676"/>
</dbReference>
<dbReference type="GO" id="GO:0004416">
    <property type="term" value="F:hydroxyacylglutathione hydrolase activity"/>
    <property type="evidence" value="ECO:0007669"/>
    <property type="project" value="UniProtKB-UniRule"/>
</dbReference>
<dbReference type="GO" id="GO:0046872">
    <property type="term" value="F:metal ion binding"/>
    <property type="evidence" value="ECO:0007669"/>
    <property type="project" value="UniProtKB-KW"/>
</dbReference>
<dbReference type="GO" id="GO:0019243">
    <property type="term" value="P:methylglyoxal catabolic process to D-lactate via S-lactoyl-glutathione"/>
    <property type="evidence" value="ECO:0007669"/>
    <property type="project" value="InterPro"/>
</dbReference>
<dbReference type="CDD" id="cd07723">
    <property type="entry name" value="hydroxyacylglutathione_hydrolase_MBL-fold"/>
    <property type="match status" value="1"/>
</dbReference>
<dbReference type="Gene3D" id="3.60.15.10">
    <property type="entry name" value="Ribonuclease Z/Hydroxyacylglutathione hydrolase-like"/>
    <property type="match status" value="1"/>
</dbReference>
<dbReference type="HAMAP" id="MF_01374">
    <property type="entry name" value="Glyoxalase_2"/>
    <property type="match status" value="1"/>
</dbReference>
<dbReference type="InterPro" id="IPR035680">
    <property type="entry name" value="Clx_II_MBL"/>
</dbReference>
<dbReference type="InterPro" id="IPR050110">
    <property type="entry name" value="Glyoxalase_II_hydrolase"/>
</dbReference>
<dbReference type="InterPro" id="IPR032282">
    <property type="entry name" value="HAGH_C"/>
</dbReference>
<dbReference type="InterPro" id="IPR017782">
    <property type="entry name" value="Hydroxyacylglutathione_Hdrlase"/>
</dbReference>
<dbReference type="InterPro" id="IPR001279">
    <property type="entry name" value="Metallo-B-lactamas"/>
</dbReference>
<dbReference type="InterPro" id="IPR036866">
    <property type="entry name" value="RibonucZ/Hydroxyglut_hydro"/>
</dbReference>
<dbReference type="NCBIfam" id="TIGR03413">
    <property type="entry name" value="GSH_gloB"/>
    <property type="match status" value="1"/>
</dbReference>
<dbReference type="PANTHER" id="PTHR43705">
    <property type="entry name" value="HYDROXYACYLGLUTATHIONE HYDROLASE"/>
    <property type="match status" value="1"/>
</dbReference>
<dbReference type="PANTHER" id="PTHR43705:SF1">
    <property type="entry name" value="HYDROXYACYLGLUTATHIONE HYDROLASE GLOB"/>
    <property type="match status" value="1"/>
</dbReference>
<dbReference type="Pfam" id="PF16123">
    <property type="entry name" value="HAGH_C"/>
    <property type="match status" value="1"/>
</dbReference>
<dbReference type="Pfam" id="PF00753">
    <property type="entry name" value="Lactamase_B"/>
    <property type="match status" value="1"/>
</dbReference>
<dbReference type="PIRSF" id="PIRSF005457">
    <property type="entry name" value="Glx"/>
    <property type="match status" value="1"/>
</dbReference>
<dbReference type="SMART" id="SM00849">
    <property type="entry name" value="Lactamase_B"/>
    <property type="match status" value="1"/>
</dbReference>
<dbReference type="SUPFAM" id="SSF56281">
    <property type="entry name" value="Metallo-hydrolase/oxidoreductase"/>
    <property type="match status" value="1"/>
</dbReference>
<keyword id="KW-0378">Hydrolase</keyword>
<keyword id="KW-0479">Metal-binding</keyword>
<keyword id="KW-0862">Zinc</keyword>
<organism>
    <name type="scientific">Yersinia pseudotuberculosis serotype O:3 (strain YPIII)</name>
    <dbReference type="NCBI Taxonomy" id="502800"/>
    <lineage>
        <taxon>Bacteria</taxon>
        <taxon>Pseudomonadati</taxon>
        <taxon>Pseudomonadota</taxon>
        <taxon>Gammaproteobacteria</taxon>
        <taxon>Enterobacterales</taxon>
        <taxon>Yersiniaceae</taxon>
        <taxon>Yersinia</taxon>
    </lineage>
</organism>